<keyword id="KW-0456">Lyase</keyword>
<keyword id="KW-0663">Pyridoxal phosphate</keyword>
<feature type="chain" id="PRO_0000291730" description="D-serine dehydratase 2">
    <location>
        <begin position="1"/>
        <end position="442"/>
    </location>
</feature>
<feature type="modified residue" description="N6-(pyridoxal phosphate)lysine" evidence="1">
    <location>
        <position position="118"/>
    </location>
</feature>
<dbReference type="EC" id="4.3.1.18" evidence="1"/>
<dbReference type="EMBL" id="CP000247">
    <property type="protein sequence ID" value="ABG72526.1"/>
    <property type="molecule type" value="Genomic_DNA"/>
</dbReference>
<dbReference type="SMR" id="Q0T953"/>
<dbReference type="KEGG" id="ecp:ECP_4590"/>
<dbReference type="HOGENOM" id="CLU_035707_0_0_6"/>
<dbReference type="Proteomes" id="UP000009182">
    <property type="component" value="Chromosome"/>
</dbReference>
<dbReference type="GO" id="GO:0008721">
    <property type="term" value="F:D-serine ammonia-lyase activity"/>
    <property type="evidence" value="ECO:0007669"/>
    <property type="project" value="UniProtKB-EC"/>
</dbReference>
<dbReference type="GO" id="GO:0016836">
    <property type="term" value="F:hydro-lyase activity"/>
    <property type="evidence" value="ECO:0007669"/>
    <property type="project" value="UniProtKB-UniRule"/>
</dbReference>
<dbReference type="GO" id="GO:0030170">
    <property type="term" value="F:pyridoxal phosphate binding"/>
    <property type="evidence" value="ECO:0007669"/>
    <property type="project" value="InterPro"/>
</dbReference>
<dbReference type="GO" id="GO:0036088">
    <property type="term" value="P:D-serine catabolic process"/>
    <property type="evidence" value="ECO:0007669"/>
    <property type="project" value="TreeGrafter"/>
</dbReference>
<dbReference type="GO" id="GO:0009097">
    <property type="term" value="P:isoleucine biosynthetic process"/>
    <property type="evidence" value="ECO:0007669"/>
    <property type="project" value="TreeGrafter"/>
</dbReference>
<dbReference type="CDD" id="cd06447">
    <property type="entry name" value="D-Ser-dehyd"/>
    <property type="match status" value="1"/>
</dbReference>
<dbReference type="FunFam" id="3.40.50.1100:FF:000018">
    <property type="entry name" value="D-serine dehydratase"/>
    <property type="match status" value="1"/>
</dbReference>
<dbReference type="Gene3D" id="3.40.50.1100">
    <property type="match status" value="2"/>
</dbReference>
<dbReference type="HAMAP" id="MF_01030">
    <property type="entry name" value="D_Ser_dehydrat"/>
    <property type="match status" value="1"/>
</dbReference>
<dbReference type="InterPro" id="IPR011780">
    <property type="entry name" value="D_Ser_am_lyase"/>
</dbReference>
<dbReference type="InterPro" id="IPR050147">
    <property type="entry name" value="Ser/Thr_Dehydratase"/>
</dbReference>
<dbReference type="InterPro" id="IPR000634">
    <property type="entry name" value="Ser/Thr_deHydtase_PyrdxlP-BS"/>
</dbReference>
<dbReference type="InterPro" id="IPR001926">
    <property type="entry name" value="TrpB-like_PALP"/>
</dbReference>
<dbReference type="InterPro" id="IPR036052">
    <property type="entry name" value="TrpB-like_PALP_sf"/>
</dbReference>
<dbReference type="NCBIfam" id="TIGR02035">
    <property type="entry name" value="D_Ser_am_lyase"/>
    <property type="match status" value="1"/>
</dbReference>
<dbReference type="NCBIfam" id="NF002823">
    <property type="entry name" value="PRK02991.1"/>
    <property type="match status" value="1"/>
</dbReference>
<dbReference type="PANTHER" id="PTHR48078:SF9">
    <property type="entry name" value="D-SERINE DEHYDRATASE"/>
    <property type="match status" value="1"/>
</dbReference>
<dbReference type="PANTHER" id="PTHR48078">
    <property type="entry name" value="THREONINE DEHYDRATASE, MITOCHONDRIAL-RELATED"/>
    <property type="match status" value="1"/>
</dbReference>
<dbReference type="Pfam" id="PF00291">
    <property type="entry name" value="PALP"/>
    <property type="match status" value="1"/>
</dbReference>
<dbReference type="SUPFAM" id="SSF53686">
    <property type="entry name" value="Tryptophan synthase beta subunit-like PLP-dependent enzymes"/>
    <property type="match status" value="1"/>
</dbReference>
<dbReference type="PROSITE" id="PS00165">
    <property type="entry name" value="DEHYDRATASE_SER_THR"/>
    <property type="match status" value="1"/>
</dbReference>
<proteinExistence type="inferred from homology"/>
<evidence type="ECO:0000255" key="1">
    <source>
        <dbReference type="HAMAP-Rule" id="MF_01030"/>
    </source>
</evidence>
<sequence length="442" mass="47881">MENAKMNSLIAQYPLVKDLVALKETTWFNPGTTSLAEGLPYVGLTEQDVQDAHARLSRFAPYLAKAFPETAATGGIIESELVAIPAMQKRLEKEYQQPISGQLLLKKDSHLPISGSIKARGGIYEVLAHAEKLALEAGLLTLEDDYSKLLSPEFKQFFSQYSIAVGSTGNLGLSIGIMSARIGFKVTVHMSADARAWKKAKLRSHGVTVVEYEQDYGVAVEEGRKAAQSDPNCFFIDDENSRTLFLGYSVAGQRLKAQFAQQGRIVDADNPLFVYLPCGVGGGPGGVAFGLKLAFGDHVHCFFAEPTHSPCMLLGVHTGLHDQISVQDIGIDNLTAADGLAVGRASGFVGRAMERLLDGFYTLSDQTMYDMLGWLAQEEGIRLEPSALAGMAGPQRVCASVSYQQMHGFSAEQLRNATHLVWATGGGMVPEEEMEQYLAKGH</sequence>
<name>SDHD2_ECOL5</name>
<accession>Q0T953</accession>
<protein>
    <recommendedName>
        <fullName evidence="1">D-serine dehydratase 2</fullName>
        <ecNumber evidence="1">4.3.1.18</ecNumber>
    </recommendedName>
    <alternativeName>
        <fullName evidence="1">D-serine deaminase 2</fullName>
        <shortName evidence="1">DSD 2</shortName>
    </alternativeName>
</protein>
<gene>
    <name evidence="1" type="primary">dsdA2</name>
    <name type="ordered locus">ECP_4590</name>
</gene>
<organism>
    <name type="scientific">Escherichia coli O6:K15:H31 (strain 536 / UPEC)</name>
    <dbReference type="NCBI Taxonomy" id="362663"/>
    <lineage>
        <taxon>Bacteria</taxon>
        <taxon>Pseudomonadati</taxon>
        <taxon>Pseudomonadota</taxon>
        <taxon>Gammaproteobacteria</taxon>
        <taxon>Enterobacterales</taxon>
        <taxon>Enterobacteriaceae</taxon>
        <taxon>Escherichia</taxon>
    </lineage>
</organism>
<comment type="catalytic activity">
    <reaction evidence="1">
        <text>D-serine = pyruvate + NH4(+)</text>
        <dbReference type="Rhea" id="RHEA:13977"/>
        <dbReference type="ChEBI" id="CHEBI:15361"/>
        <dbReference type="ChEBI" id="CHEBI:28938"/>
        <dbReference type="ChEBI" id="CHEBI:35247"/>
        <dbReference type="EC" id="4.3.1.18"/>
    </reaction>
</comment>
<comment type="cofactor">
    <cofactor evidence="1">
        <name>pyridoxal 5'-phosphate</name>
        <dbReference type="ChEBI" id="CHEBI:597326"/>
    </cofactor>
</comment>
<comment type="subunit">
    <text evidence="1">Monomer.</text>
</comment>
<comment type="similarity">
    <text evidence="1">Belongs to the serine/threonine dehydratase family. DsdA subfamily.</text>
</comment>
<reference key="1">
    <citation type="journal article" date="2006" name="Mol. Microbiol.">
        <title>Role of pathogenicity island-associated integrases in the genome plasticity of uropathogenic Escherichia coli strain 536.</title>
        <authorList>
            <person name="Hochhut B."/>
            <person name="Wilde C."/>
            <person name="Balling G."/>
            <person name="Middendorf B."/>
            <person name="Dobrindt U."/>
            <person name="Brzuszkiewicz E."/>
            <person name="Gottschalk G."/>
            <person name="Carniel E."/>
            <person name="Hacker J."/>
        </authorList>
    </citation>
    <scope>NUCLEOTIDE SEQUENCE [LARGE SCALE GENOMIC DNA]</scope>
    <source>
        <strain>536 / UPEC</strain>
    </source>
</reference>